<gene>
    <name evidence="1" type="primary">lipA</name>
    <name type="ordered locus">SAR11_0941</name>
</gene>
<accession>Q4FM35</accession>
<keyword id="KW-0004">4Fe-4S</keyword>
<keyword id="KW-0963">Cytoplasm</keyword>
<keyword id="KW-0408">Iron</keyword>
<keyword id="KW-0411">Iron-sulfur</keyword>
<keyword id="KW-0479">Metal-binding</keyword>
<keyword id="KW-1185">Reference proteome</keyword>
<keyword id="KW-0949">S-adenosyl-L-methionine</keyword>
<keyword id="KW-0808">Transferase</keyword>
<feature type="chain" id="PRO_0000325284" description="Lipoyl synthase">
    <location>
        <begin position="1"/>
        <end position="308"/>
    </location>
</feature>
<feature type="domain" description="Radical SAM core" evidence="2">
    <location>
        <begin position="63"/>
        <end position="279"/>
    </location>
</feature>
<feature type="binding site" evidence="1">
    <location>
        <position position="51"/>
    </location>
    <ligand>
        <name>[4Fe-4S] cluster</name>
        <dbReference type="ChEBI" id="CHEBI:49883"/>
        <label>1</label>
    </ligand>
</feature>
<feature type="binding site" evidence="1">
    <location>
        <position position="56"/>
    </location>
    <ligand>
        <name>[4Fe-4S] cluster</name>
        <dbReference type="ChEBI" id="CHEBI:49883"/>
        <label>1</label>
    </ligand>
</feature>
<feature type="binding site" evidence="1">
    <location>
        <position position="62"/>
    </location>
    <ligand>
        <name>[4Fe-4S] cluster</name>
        <dbReference type="ChEBI" id="CHEBI:49883"/>
        <label>1</label>
    </ligand>
</feature>
<feature type="binding site" evidence="1">
    <location>
        <position position="77"/>
    </location>
    <ligand>
        <name>[4Fe-4S] cluster</name>
        <dbReference type="ChEBI" id="CHEBI:49883"/>
        <label>2</label>
        <note>4Fe-4S-S-AdoMet</note>
    </ligand>
</feature>
<feature type="binding site" evidence="1">
    <location>
        <position position="81"/>
    </location>
    <ligand>
        <name>[4Fe-4S] cluster</name>
        <dbReference type="ChEBI" id="CHEBI:49883"/>
        <label>2</label>
        <note>4Fe-4S-S-AdoMet</note>
    </ligand>
</feature>
<feature type="binding site" evidence="1">
    <location>
        <position position="84"/>
    </location>
    <ligand>
        <name>[4Fe-4S] cluster</name>
        <dbReference type="ChEBI" id="CHEBI:49883"/>
        <label>2</label>
        <note>4Fe-4S-S-AdoMet</note>
    </ligand>
</feature>
<feature type="binding site" evidence="1">
    <location>
        <position position="290"/>
    </location>
    <ligand>
        <name>[4Fe-4S] cluster</name>
        <dbReference type="ChEBI" id="CHEBI:49883"/>
        <label>1</label>
    </ligand>
</feature>
<proteinExistence type="inferred from homology"/>
<organism>
    <name type="scientific">Pelagibacter ubique (strain HTCC1062)</name>
    <dbReference type="NCBI Taxonomy" id="335992"/>
    <lineage>
        <taxon>Bacteria</taxon>
        <taxon>Pseudomonadati</taxon>
        <taxon>Pseudomonadota</taxon>
        <taxon>Alphaproteobacteria</taxon>
        <taxon>Candidatus Pelagibacterales</taxon>
        <taxon>Candidatus Pelagibacteraceae</taxon>
        <taxon>Candidatus Pelagibacter</taxon>
    </lineage>
</organism>
<protein>
    <recommendedName>
        <fullName evidence="1">Lipoyl synthase</fullName>
        <ecNumber evidence="1">2.8.1.8</ecNumber>
    </recommendedName>
    <alternativeName>
        <fullName evidence="1">Lip-syn</fullName>
        <shortName evidence="1">LS</shortName>
    </alternativeName>
    <alternativeName>
        <fullName evidence="1">Lipoate synthase</fullName>
    </alternativeName>
    <alternativeName>
        <fullName evidence="1">Lipoic acid synthase</fullName>
    </alternativeName>
    <alternativeName>
        <fullName evidence="1">Sulfur insertion protein LipA</fullName>
    </alternativeName>
</protein>
<comment type="function">
    <text evidence="1">Catalyzes the radical-mediated insertion of two sulfur atoms into the C-6 and C-8 positions of the octanoyl moiety bound to the lipoyl domains of lipoate-dependent enzymes, thereby converting the octanoylated domains into lipoylated derivatives.</text>
</comment>
<comment type="catalytic activity">
    <reaction evidence="1">
        <text>[[Fe-S] cluster scaffold protein carrying a second [4Fe-4S](2+) cluster] + N(6)-octanoyl-L-lysyl-[protein] + 2 oxidized [2Fe-2S]-[ferredoxin] + 2 S-adenosyl-L-methionine + 4 H(+) = [[Fe-S] cluster scaffold protein] + N(6)-[(R)-dihydrolipoyl]-L-lysyl-[protein] + 4 Fe(3+) + 2 hydrogen sulfide + 2 5'-deoxyadenosine + 2 L-methionine + 2 reduced [2Fe-2S]-[ferredoxin]</text>
        <dbReference type="Rhea" id="RHEA:16585"/>
        <dbReference type="Rhea" id="RHEA-COMP:9928"/>
        <dbReference type="Rhea" id="RHEA-COMP:10000"/>
        <dbReference type="Rhea" id="RHEA-COMP:10001"/>
        <dbReference type="Rhea" id="RHEA-COMP:10475"/>
        <dbReference type="Rhea" id="RHEA-COMP:14568"/>
        <dbReference type="Rhea" id="RHEA-COMP:14569"/>
        <dbReference type="ChEBI" id="CHEBI:15378"/>
        <dbReference type="ChEBI" id="CHEBI:17319"/>
        <dbReference type="ChEBI" id="CHEBI:29034"/>
        <dbReference type="ChEBI" id="CHEBI:29919"/>
        <dbReference type="ChEBI" id="CHEBI:33722"/>
        <dbReference type="ChEBI" id="CHEBI:33737"/>
        <dbReference type="ChEBI" id="CHEBI:33738"/>
        <dbReference type="ChEBI" id="CHEBI:57844"/>
        <dbReference type="ChEBI" id="CHEBI:59789"/>
        <dbReference type="ChEBI" id="CHEBI:78809"/>
        <dbReference type="ChEBI" id="CHEBI:83100"/>
        <dbReference type="EC" id="2.8.1.8"/>
    </reaction>
</comment>
<comment type="cofactor">
    <cofactor evidence="1">
        <name>[4Fe-4S] cluster</name>
        <dbReference type="ChEBI" id="CHEBI:49883"/>
    </cofactor>
    <text evidence="1">Binds 2 [4Fe-4S] clusters per subunit. One cluster is coordinated with 3 cysteines and an exchangeable S-adenosyl-L-methionine.</text>
</comment>
<comment type="pathway">
    <text evidence="1">Protein modification; protein lipoylation via endogenous pathway; protein N(6)-(lipoyl)lysine from octanoyl-[acyl-carrier-protein]: step 2/2.</text>
</comment>
<comment type="subcellular location">
    <subcellularLocation>
        <location evidence="1">Cytoplasm</location>
    </subcellularLocation>
</comment>
<comment type="similarity">
    <text evidence="1">Belongs to the radical SAM superfamily. Lipoyl synthase family.</text>
</comment>
<dbReference type="EC" id="2.8.1.8" evidence="1"/>
<dbReference type="EMBL" id="CP000084">
    <property type="protein sequence ID" value="AAZ21753.1"/>
    <property type="molecule type" value="Genomic_DNA"/>
</dbReference>
<dbReference type="RefSeq" id="WP_011282056.1">
    <property type="nucleotide sequence ID" value="NC_007205.1"/>
</dbReference>
<dbReference type="SMR" id="Q4FM35"/>
<dbReference type="STRING" id="335992.SAR11_0941"/>
<dbReference type="GeneID" id="66295432"/>
<dbReference type="KEGG" id="pub:SAR11_0941"/>
<dbReference type="eggNOG" id="COG0320">
    <property type="taxonomic scope" value="Bacteria"/>
</dbReference>
<dbReference type="HOGENOM" id="CLU_033144_2_1_5"/>
<dbReference type="OrthoDB" id="9787898at2"/>
<dbReference type="UniPathway" id="UPA00538">
    <property type="reaction ID" value="UER00593"/>
</dbReference>
<dbReference type="Proteomes" id="UP000002528">
    <property type="component" value="Chromosome"/>
</dbReference>
<dbReference type="GO" id="GO:0005737">
    <property type="term" value="C:cytoplasm"/>
    <property type="evidence" value="ECO:0007669"/>
    <property type="project" value="UniProtKB-SubCell"/>
</dbReference>
<dbReference type="GO" id="GO:0051539">
    <property type="term" value="F:4 iron, 4 sulfur cluster binding"/>
    <property type="evidence" value="ECO:0007669"/>
    <property type="project" value="UniProtKB-UniRule"/>
</dbReference>
<dbReference type="GO" id="GO:0016992">
    <property type="term" value="F:lipoate synthase activity"/>
    <property type="evidence" value="ECO:0007669"/>
    <property type="project" value="UniProtKB-UniRule"/>
</dbReference>
<dbReference type="GO" id="GO:0046872">
    <property type="term" value="F:metal ion binding"/>
    <property type="evidence" value="ECO:0007669"/>
    <property type="project" value="UniProtKB-KW"/>
</dbReference>
<dbReference type="CDD" id="cd01335">
    <property type="entry name" value="Radical_SAM"/>
    <property type="match status" value="1"/>
</dbReference>
<dbReference type="FunFam" id="3.20.20.70:FF:000040">
    <property type="entry name" value="Lipoyl synthase"/>
    <property type="match status" value="1"/>
</dbReference>
<dbReference type="Gene3D" id="3.20.20.70">
    <property type="entry name" value="Aldolase class I"/>
    <property type="match status" value="1"/>
</dbReference>
<dbReference type="HAMAP" id="MF_00206">
    <property type="entry name" value="Lipoyl_synth"/>
    <property type="match status" value="1"/>
</dbReference>
<dbReference type="InterPro" id="IPR013785">
    <property type="entry name" value="Aldolase_TIM"/>
</dbReference>
<dbReference type="InterPro" id="IPR006638">
    <property type="entry name" value="Elp3/MiaA/NifB-like_rSAM"/>
</dbReference>
<dbReference type="InterPro" id="IPR003698">
    <property type="entry name" value="Lipoyl_synth"/>
</dbReference>
<dbReference type="InterPro" id="IPR007197">
    <property type="entry name" value="rSAM"/>
</dbReference>
<dbReference type="NCBIfam" id="TIGR00510">
    <property type="entry name" value="lipA"/>
    <property type="match status" value="1"/>
</dbReference>
<dbReference type="NCBIfam" id="NF004019">
    <property type="entry name" value="PRK05481.1"/>
    <property type="match status" value="1"/>
</dbReference>
<dbReference type="NCBIfam" id="NF009544">
    <property type="entry name" value="PRK12928.1"/>
    <property type="match status" value="1"/>
</dbReference>
<dbReference type="PANTHER" id="PTHR10949">
    <property type="entry name" value="LIPOYL SYNTHASE"/>
    <property type="match status" value="1"/>
</dbReference>
<dbReference type="PANTHER" id="PTHR10949:SF0">
    <property type="entry name" value="LIPOYL SYNTHASE, MITOCHONDRIAL"/>
    <property type="match status" value="1"/>
</dbReference>
<dbReference type="Pfam" id="PF04055">
    <property type="entry name" value="Radical_SAM"/>
    <property type="match status" value="1"/>
</dbReference>
<dbReference type="PIRSF" id="PIRSF005963">
    <property type="entry name" value="Lipoyl_synth"/>
    <property type="match status" value="1"/>
</dbReference>
<dbReference type="SFLD" id="SFLDF00271">
    <property type="entry name" value="lipoyl_synthase"/>
    <property type="match status" value="1"/>
</dbReference>
<dbReference type="SFLD" id="SFLDS00029">
    <property type="entry name" value="Radical_SAM"/>
    <property type="match status" value="1"/>
</dbReference>
<dbReference type="SMART" id="SM00729">
    <property type="entry name" value="Elp3"/>
    <property type="match status" value="1"/>
</dbReference>
<dbReference type="SUPFAM" id="SSF102114">
    <property type="entry name" value="Radical SAM enzymes"/>
    <property type="match status" value="1"/>
</dbReference>
<dbReference type="PROSITE" id="PS51918">
    <property type="entry name" value="RADICAL_SAM"/>
    <property type="match status" value="1"/>
</dbReference>
<sequence length="308" mass="35150">MTTKPRHPEKVNKPLNPIKKKPDWIRSKLVNSKEFFLTKTIVNNNNLVTVCQEANCPNITECWSKRHATFMIMGDTCTRACAFCDVKTGRPGKLDSLEPVKIAEAVKKLNLKHVVITSVDRDDLDDGGSNHFFEVIDQTRKRNPNTSIEVLTPDFLRKGDAYKKVLEANPDVFNHNIETVPRLYLKVRPGSRYFSSLELLKNAKLVNKNVFTKSGLMVGLGENKEEIIQVMDDLKAADVDFLTIGQYLQPSVRHHPLDRYYHPDEFKELETIAKSKGFLLVSSTPLTRSSYHADEDFAKLQLNRINNH</sequence>
<name>LIPA_PELUB</name>
<evidence type="ECO:0000255" key="1">
    <source>
        <dbReference type="HAMAP-Rule" id="MF_00206"/>
    </source>
</evidence>
<evidence type="ECO:0000255" key="2">
    <source>
        <dbReference type="PROSITE-ProRule" id="PRU01266"/>
    </source>
</evidence>
<reference key="1">
    <citation type="journal article" date="2005" name="Science">
        <title>Genome streamlining in a cosmopolitan oceanic bacterium.</title>
        <authorList>
            <person name="Giovannoni S.J."/>
            <person name="Tripp H.J."/>
            <person name="Givan S."/>
            <person name="Podar M."/>
            <person name="Vergin K.L."/>
            <person name="Baptista D."/>
            <person name="Bibbs L."/>
            <person name="Eads J."/>
            <person name="Richardson T.H."/>
            <person name="Noordewier M."/>
            <person name="Rappe M.S."/>
            <person name="Short J.M."/>
            <person name="Carrington J.C."/>
            <person name="Mathur E.J."/>
        </authorList>
    </citation>
    <scope>NUCLEOTIDE SEQUENCE [LARGE SCALE GENOMIC DNA]</scope>
    <source>
        <strain>HTCC1062</strain>
    </source>
</reference>